<proteinExistence type="evidence at transcript level"/>
<dbReference type="EMBL" id="AC005309">
    <property type="protein sequence ID" value="AAC63653.1"/>
    <property type="molecule type" value="Genomic_DNA"/>
</dbReference>
<dbReference type="EMBL" id="AC006072">
    <property type="protein sequence ID" value="AAM15129.1"/>
    <property type="molecule type" value="Genomic_DNA"/>
</dbReference>
<dbReference type="EMBL" id="CP002685">
    <property type="protein sequence ID" value="AEC10921.1"/>
    <property type="molecule type" value="Genomic_DNA"/>
</dbReference>
<dbReference type="EMBL" id="AK118137">
    <property type="protein sequence ID" value="BAC42762.1"/>
    <property type="molecule type" value="mRNA"/>
</dbReference>
<dbReference type="PIR" id="A84922">
    <property type="entry name" value="A84922"/>
</dbReference>
<dbReference type="RefSeq" id="NP_182320.1">
    <property type="nucleotide sequence ID" value="NM_130366.3"/>
</dbReference>
<dbReference type="SMR" id="O82266"/>
<dbReference type="FunCoup" id="O82266">
    <property type="interactions" value="3481"/>
</dbReference>
<dbReference type="STRING" id="3702.O82266"/>
<dbReference type="PaxDb" id="3702-AT2G47990.1"/>
<dbReference type="ProteomicsDB" id="226789"/>
<dbReference type="DNASU" id="819411"/>
<dbReference type="EnsemblPlants" id="AT2G47990.1">
    <property type="protein sequence ID" value="AT2G47990.1"/>
    <property type="gene ID" value="AT2G47990"/>
</dbReference>
<dbReference type="GeneID" id="819411"/>
<dbReference type="Gramene" id="AT2G47990.1">
    <property type="protein sequence ID" value="AT2G47990.1"/>
    <property type="gene ID" value="AT2G47990"/>
</dbReference>
<dbReference type="KEGG" id="ath:AT2G47990"/>
<dbReference type="Araport" id="AT2G47990"/>
<dbReference type="TAIR" id="AT2G47990">
    <property type="gene designation" value="SWA1"/>
</dbReference>
<dbReference type="eggNOG" id="KOG0310">
    <property type="taxonomic scope" value="Eukaryota"/>
</dbReference>
<dbReference type="HOGENOM" id="CLU_021102_4_0_1"/>
<dbReference type="InParanoid" id="O82266"/>
<dbReference type="OMA" id="ATYQVVH"/>
<dbReference type="PhylomeDB" id="O82266"/>
<dbReference type="CD-CODE" id="4299E36E">
    <property type="entry name" value="Nucleolus"/>
</dbReference>
<dbReference type="PRO" id="PR:O82266"/>
<dbReference type="Proteomes" id="UP000006548">
    <property type="component" value="Chromosome 2"/>
</dbReference>
<dbReference type="ExpressionAtlas" id="O82266">
    <property type="expression patterns" value="baseline and differential"/>
</dbReference>
<dbReference type="GO" id="GO:0080008">
    <property type="term" value="C:Cul4-RING E3 ubiquitin ligase complex"/>
    <property type="evidence" value="ECO:0000250"/>
    <property type="project" value="TAIR"/>
</dbReference>
<dbReference type="GO" id="GO:0005730">
    <property type="term" value="C:nucleolus"/>
    <property type="evidence" value="ECO:0000314"/>
    <property type="project" value="TAIR"/>
</dbReference>
<dbReference type="GO" id="GO:0003729">
    <property type="term" value="F:mRNA binding"/>
    <property type="evidence" value="ECO:0000314"/>
    <property type="project" value="TAIR"/>
</dbReference>
<dbReference type="GO" id="GO:0051301">
    <property type="term" value="P:cell division"/>
    <property type="evidence" value="ECO:0007669"/>
    <property type="project" value="UniProtKB-KW"/>
</dbReference>
<dbReference type="GO" id="GO:0009553">
    <property type="term" value="P:embryo sac development"/>
    <property type="evidence" value="ECO:0000315"/>
    <property type="project" value="TAIR"/>
</dbReference>
<dbReference type="GO" id="GO:0009561">
    <property type="term" value="P:megagametogenesis"/>
    <property type="evidence" value="ECO:0000315"/>
    <property type="project" value="TAIR"/>
</dbReference>
<dbReference type="GO" id="GO:0006364">
    <property type="term" value="P:rRNA processing"/>
    <property type="evidence" value="ECO:0000315"/>
    <property type="project" value="TAIR"/>
</dbReference>
<dbReference type="FunFam" id="2.130.10.10:FF:001192">
    <property type="entry name" value="Protein SLOW WALKER 1"/>
    <property type="match status" value="1"/>
</dbReference>
<dbReference type="Gene3D" id="2.130.10.10">
    <property type="entry name" value="YVTN repeat-like/Quinoprotein amine dehydrogenase"/>
    <property type="match status" value="2"/>
</dbReference>
<dbReference type="InterPro" id="IPR020472">
    <property type="entry name" value="G-protein_beta_WD-40_rep"/>
</dbReference>
<dbReference type="InterPro" id="IPR018983">
    <property type="entry name" value="U3_snoRNA-assocProt_15_C"/>
</dbReference>
<dbReference type="InterPro" id="IPR015943">
    <property type="entry name" value="WD40/YVTN_repeat-like_dom_sf"/>
</dbReference>
<dbReference type="InterPro" id="IPR036322">
    <property type="entry name" value="WD40_repeat_dom_sf"/>
</dbReference>
<dbReference type="InterPro" id="IPR001680">
    <property type="entry name" value="WD40_rpt"/>
</dbReference>
<dbReference type="PANTHER" id="PTHR19924:SF26">
    <property type="entry name" value="U3 SMALL NUCLEOLAR RNA-ASSOCIATED PROTEIN 15 HOMOLOG"/>
    <property type="match status" value="1"/>
</dbReference>
<dbReference type="PANTHER" id="PTHR19924">
    <property type="entry name" value="UTP15 U3 SMALL NUCLEOLAR RNA-ASSOCIATED PROTEIN 15 FAMILY MEMBER"/>
    <property type="match status" value="1"/>
</dbReference>
<dbReference type="Pfam" id="PF09384">
    <property type="entry name" value="UTP15_C"/>
    <property type="match status" value="1"/>
</dbReference>
<dbReference type="Pfam" id="PF00400">
    <property type="entry name" value="WD40"/>
    <property type="match status" value="4"/>
</dbReference>
<dbReference type="PRINTS" id="PR00320">
    <property type="entry name" value="GPROTEINBRPT"/>
</dbReference>
<dbReference type="SMART" id="SM00320">
    <property type="entry name" value="WD40"/>
    <property type="match status" value="6"/>
</dbReference>
<dbReference type="SUPFAM" id="SSF50978">
    <property type="entry name" value="WD40 repeat-like"/>
    <property type="match status" value="1"/>
</dbReference>
<dbReference type="PROSITE" id="PS00678">
    <property type="entry name" value="WD_REPEATS_1"/>
    <property type="match status" value="1"/>
</dbReference>
<dbReference type="PROSITE" id="PS50082">
    <property type="entry name" value="WD_REPEATS_2"/>
    <property type="match status" value="2"/>
</dbReference>
<dbReference type="PROSITE" id="PS50294">
    <property type="entry name" value="WD_REPEATS_REGION"/>
    <property type="match status" value="1"/>
</dbReference>
<sequence length="530" mass="58903">MEEELRVRLNDHQVSKVFPVKPKSTAKPVSESETPESRYWSSFKNHSTPNLVSSVAALAFSPVHPHSLAVAHSATVSLFSSQSLSSSRRFSFRDVVSSVCFRSDGALFAACDLSGVVQVFDIKERMALRTLRSHSAPARFVKYPVQDKLHLVSGGDDGVVKYWDVAGATVISDLLGHKDYVRCGDCSPVNDSMLVTGSYDHTVKVWDARVHTSNWIAEINHGLPVEDVVYLPSGGLIATAGGNSVKVWDLIGGGKMVCSMESHNKTVTSLRVARMESAESRLVSVALDGYMKVFDYGRAKVTYSMRFPAPLMSLGLSPDGSTRVIGGSNGMVFAGKKKVRDVVGGQKKSLNLWSLISDVDESRRRALRPTYFRYFQRGQSEKPSKDDYLVKEKKGLKLTRHDKLLKKFRHKEALVSVLEEKKPANVVAVMEELVARRKLMKCVSNMEEGELGMLLGFLQRYCTVQRYSGLLMGLTKKVLETRAEDIKGKNEFKGLLRNLKREVNQEIRIQQSLLEIQGVIAPLMRIAGRS</sequence>
<accession>O82266</accession>
<accession>Q8GXN5</accession>
<evidence type="ECO:0000255" key="1"/>
<evidence type="ECO:0000255" key="2">
    <source>
        <dbReference type="PROSITE-ProRule" id="PRU00768"/>
    </source>
</evidence>
<evidence type="ECO:0000269" key="3">
    <source>
    </source>
</evidence>
<evidence type="ECO:0000269" key="4">
    <source>
    </source>
</evidence>
<evidence type="ECO:0000303" key="5">
    <source>
    </source>
</evidence>
<evidence type="ECO:0000303" key="6">
    <source>
    </source>
</evidence>
<evidence type="ECO:0000305" key="7"/>
<evidence type="ECO:0000312" key="8">
    <source>
        <dbReference type="Araport" id="AT2G47990"/>
    </source>
</evidence>
<evidence type="ECO:0000312" key="9">
    <source>
        <dbReference type="EMBL" id="AAC63653.1"/>
    </source>
</evidence>
<evidence type="ECO:0000312" key="10">
    <source>
        <dbReference type="EMBL" id="AAM15129.1"/>
    </source>
</evidence>
<evidence type="ECO:0000312" key="11">
    <source>
        <dbReference type="Proteomes" id="UP000006548"/>
    </source>
</evidence>
<organism evidence="11">
    <name type="scientific">Arabidopsis thaliana</name>
    <name type="common">Mouse-ear cress</name>
    <dbReference type="NCBI Taxonomy" id="3702"/>
    <lineage>
        <taxon>Eukaryota</taxon>
        <taxon>Viridiplantae</taxon>
        <taxon>Streptophyta</taxon>
        <taxon>Embryophyta</taxon>
        <taxon>Tracheophyta</taxon>
        <taxon>Spermatophyta</taxon>
        <taxon>Magnoliopsida</taxon>
        <taxon>eudicotyledons</taxon>
        <taxon>Gunneridae</taxon>
        <taxon>Pentapetalae</taxon>
        <taxon>rosids</taxon>
        <taxon>malvids</taxon>
        <taxon>Brassicales</taxon>
        <taxon>Brassicaceae</taxon>
        <taxon>Camelineae</taxon>
        <taxon>Arabidopsis</taxon>
    </lineage>
</organism>
<keyword id="KW-0131">Cell cycle</keyword>
<keyword id="KW-0132">Cell division</keyword>
<keyword id="KW-0217">Developmental protein</keyword>
<keyword id="KW-0539">Nucleus</keyword>
<keyword id="KW-1185">Reference proteome</keyword>
<keyword id="KW-0677">Repeat</keyword>
<keyword id="KW-0698">rRNA processing</keyword>
<keyword id="KW-0853">WD repeat</keyword>
<comment type="function">
    <text evidence="3 4">Essential protein required for nuclear division and organization during embryo sac development in female gametophyte, probably by promoting rRNA biogenesis essential for the progression of the mitotic division cycles during gametogenesis (PubMed:15634699, PubMed:15980260). Involved in nucleolar processing of pre-18S ribosomal RNA (PubMed:15980260).</text>
</comment>
<comment type="subcellular location">
    <subcellularLocation>
        <location evidence="4">Nucleus</location>
        <location evidence="4">Nucleolus</location>
    </subcellularLocation>
    <text evidence="4">Localized in the nucleolus in interphase cells.</text>
</comment>
<comment type="tissue specificity">
    <text evidence="4">Expressed in cells undergoing active cell divisions, including functional megaspores and the female gametophytic cells. Accumulates in roots, stems, leaves, inflorescences and siliques.</text>
</comment>
<comment type="developmental stage">
    <text evidence="4">Accumulates in root tips and lateral root primordia. Present in young leaf and stem vascular tissues. Expressed throughout pollen development from very young floral buds to dehisced anthers, especially in microsporogenous cells, microspores, and mature pollen grains. In female reproductive organs, detected in megaspores and embryo sacs from one-nucleate to seven-celled embryo sacs.</text>
</comment>
<comment type="disruption phenotype">
    <text evidence="3 4">Embryo sac development arrest at two-, four-, or eight-nucleate stages, associated with abnormal nuclear numbers and positions in embryo sac, aberrant embryo sacs and unfused polar nuclei (PubMed:15634699). Disrupted progression of the mitotic division cycles of the female gametophyte leading to an impaired synchrony of female gametophyte development (PubMed:15980260). Reduced root growth and accumulation of unprocessed 18S pre-rRNA (PubMed:15980260).</text>
</comment>
<protein>
    <recommendedName>
        <fullName evidence="6">Protein SLOW WALKER 1</fullName>
    </recommendedName>
    <alternativeName>
        <fullName evidence="5">Protein EMBRYO SAC DEVELOPMENT ARREST 13</fullName>
    </alternativeName>
    <alternativeName>
        <fullName evidence="5">Protein EMBRYO SAC DEVELOPMENT ARREST 19</fullName>
    </alternativeName>
</protein>
<name>SWA1_ARATH</name>
<gene>
    <name evidence="6" type="primary">SWA1</name>
    <name evidence="5" type="synonym">EDA13</name>
    <name evidence="5" type="synonym">EDA19</name>
    <name evidence="8" type="ordered locus">At2g47990</name>
    <name evidence="9" type="ORF">F17A22</name>
    <name evidence="10" type="ORF">T9J23.30</name>
</gene>
<reference key="1">
    <citation type="journal article" date="1999" name="Nature">
        <title>Sequence and analysis of chromosome 2 of the plant Arabidopsis thaliana.</title>
        <authorList>
            <person name="Lin X."/>
            <person name="Kaul S."/>
            <person name="Rounsley S.D."/>
            <person name="Shea T.P."/>
            <person name="Benito M.-I."/>
            <person name="Town C.D."/>
            <person name="Fujii C.Y."/>
            <person name="Mason T.M."/>
            <person name="Bowman C.L."/>
            <person name="Barnstead M.E."/>
            <person name="Feldblyum T.V."/>
            <person name="Buell C.R."/>
            <person name="Ketchum K.A."/>
            <person name="Lee J.J."/>
            <person name="Ronning C.M."/>
            <person name="Koo H.L."/>
            <person name="Moffat K.S."/>
            <person name="Cronin L.A."/>
            <person name="Shen M."/>
            <person name="Pai G."/>
            <person name="Van Aken S."/>
            <person name="Umayam L."/>
            <person name="Tallon L.J."/>
            <person name="Gill J.E."/>
            <person name="Adams M.D."/>
            <person name="Carrera A.J."/>
            <person name="Creasy T.H."/>
            <person name="Goodman H.M."/>
            <person name="Somerville C.R."/>
            <person name="Copenhaver G.P."/>
            <person name="Preuss D."/>
            <person name="Nierman W.C."/>
            <person name="White O."/>
            <person name="Eisen J.A."/>
            <person name="Salzberg S.L."/>
            <person name="Fraser C.M."/>
            <person name="Venter J.C."/>
        </authorList>
    </citation>
    <scope>NUCLEOTIDE SEQUENCE [LARGE SCALE GENOMIC DNA]</scope>
    <source>
        <strain>cv. Columbia</strain>
    </source>
</reference>
<reference key="2">
    <citation type="journal article" date="2017" name="Plant J.">
        <title>Araport11: a complete reannotation of the Arabidopsis thaliana reference genome.</title>
        <authorList>
            <person name="Cheng C.Y."/>
            <person name="Krishnakumar V."/>
            <person name="Chan A.P."/>
            <person name="Thibaud-Nissen F."/>
            <person name="Schobel S."/>
            <person name="Town C.D."/>
        </authorList>
    </citation>
    <scope>GENOME REANNOTATION</scope>
    <source>
        <strain>cv. Columbia</strain>
    </source>
</reference>
<reference key="3">
    <citation type="journal article" date="2002" name="Science">
        <title>Functional annotation of a full-length Arabidopsis cDNA collection.</title>
        <authorList>
            <person name="Seki M."/>
            <person name="Narusaka M."/>
            <person name="Kamiya A."/>
            <person name="Ishida J."/>
            <person name="Satou M."/>
            <person name="Sakurai T."/>
            <person name="Nakajima M."/>
            <person name="Enju A."/>
            <person name="Akiyama K."/>
            <person name="Oono Y."/>
            <person name="Muramatsu M."/>
            <person name="Hayashizaki Y."/>
            <person name="Kawai J."/>
            <person name="Carninci P."/>
            <person name="Itoh M."/>
            <person name="Ishii Y."/>
            <person name="Arakawa T."/>
            <person name="Shibata K."/>
            <person name="Shinagawa A."/>
            <person name="Shinozaki K."/>
        </authorList>
    </citation>
    <scope>NUCLEOTIDE SEQUENCE [LARGE SCALE MRNA]</scope>
    <source>
        <strain>cv. Columbia</strain>
    </source>
</reference>
<reference key="4">
    <citation type="journal article" date="2005" name="Development">
        <title>Genetic and molecular identification of genes required for female gametophyte development and function in Arabidopsis.</title>
        <authorList>
            <person name="Pagnussat G.C."/>
            <person name="Yu H.-J."/>
            <person name="Ngo Q.A."/>
            <person name="Rajani S."/>
            <person name="Mayalagu S."/>
            <person name="Johnson C.S."/>
            <person name="Capron A."/>
            <person name="Xie L.-F."/>
            <person name="Ye D."/>
            <person name="Sundaresan V."/>
        </authorList>
    </citation>
    <scope>FUNCTION</scope>
    <scope>DISRUPTION PHENOTYPE</scope>
</reference>
<reference key="5">
    <citation type="journal article" date="2005" name="Plant Cell">
        <title>SLOW WALKER1, essential for gametogenesis in Arabidopsis, encodes a WD40 protein involved in 18S ribosomal RNA biogenesis.</title>
        <authorList>
            <person name="Shi D.-Q."/>
            <person name="Liu J."/>
            <person name="Xiang Y.-H."/>
            <person name="Ye D."/>
            <person name="Sundaresan V."/>
            <person name="Yang W.-C."/>
        </authorList>
    </citation>
    <scope>FUNCTION</scope>
    <scope>DISRUPTION PHENOTYPE</scope>
    <scope>SUBCELLULAR LOCATION</scope>
    <scope>TISSUE SPECIFICITY</scope>
    <scope>DEVELOPMENTAL STAGE</scope>
    <source>
        <strain>cv. Landsberg erecta</strain>
    </source>
</reference>
<feature type="chain" id="PRO_0000432652" description="Protein SLOW WALKER 1">
    <location>
        <begin position="1"/>
        <end position="530"/>
    </location>
</feature>
<feature type="repeat" description="WD 1" evidence="1">
    <location>
        <begin position="50"/>
        <end position="89"/>
    </location>
</feature>
<feature type="repeat" description="WD 2" evidence="1">
    <location>
        <begin position="91"/>
        <end position="130"/>
    </location>
</feature>
<feature type="repeat" description="WD 3" evidence="1">
    <location>
        <begin position="133"/>
        <end position="173"/>
    </location>
</feature>
<feature type="repeat" description="WD 4" evidence="1">
    <location>
        <begin position="176"/>
        <end position="216"/>
    </location>
</feature>
<feature type="repeat" description="WD 5" evidence="1">
    <location>
        <begin position="220"/>
        <end position="258"/>
    </location>
</feature>
<feature type="repeat" description="WD 6" evidence="1">
    <location>
        <begin position="262"/>
        <end position="304"/>
    </location>
</feature>
<feature type="repeat" description="WD 7" evidence="1">
    <location>
        <begin position="320"/>
        <end position="363"/>
    </location>
</feature>
<feature type="short sequence motif" description="Nuclear localization signal" evidence="2">
    <location>
        <begin position="392"/>
        <end position="399"/>
    </location>
</feature>
<feature type="sequence conflict" description="In Ref. 3; BAC42762." evidence="7" ref="3">
    <original>P</original>
    <variation>S</variation>
    <location>
        <position position="188"/>
    </location>
</feature>
<feature type="sequence conflict" description="In Ref. 3; BAC42762." evidence="7" ref="3">
    <original>K</original>
    <variation>E</variation>
    <location>
        <position position="382"/>
    </location>
</feature>